<evidence type="ECO:0000255" key="1">
    <source>
        <dbReference type="HAMAP-Rule" id="MF_01592"/>
    </source>
</evidence>
<name>NUDL_SHIFL</name>
<organism>
    <name type="scientific">Shigella flexneri</name>
    <dbReference type="NCBI Taxonomy" id="623"/>
    <lineage>
        <taxon>Bacteria</taxon>
        <taxon>Pseudomonadati</taxon>
        <taxon>Pseudomonadota</taxon>
        <taxon>Gammaproteobacteria</taxon>
        <taxon>Enterobacterales</taxon>
        <taxon>Enterobacteriaceae</taxon>
        <taxon>Shigella</taxon>
    </lineage>
</organism>
<gene>
    <name evidence="1" type="primary">nudL</name>
    <name type="ordered locus">SF1415</name>
    <name type="ordered locus">S1530</name>
</gene>
<dbReference type="EC" id="3.6.1.-" evidence="1"/>
<dbReference type="EMBL" id="AE005674">
    <property type="protein sequence ID" value="AAN43016.1"/>
    <property type="molecule type" value="Genomic_DNA"/>
</dbReference>
<dbReference type="EMBL" id="AE014073">
    <property type="protein sequence ID" value="AAP16911.1"/>
    <property type="molecule type" value="Genomic_DNA"/>
</dbReference>
<dbReference type="RefSeq" id="WP_000456710.1">
    <property type="nucleotide sequence ID" value="NZ_WPGW01000062.1"/>
</dbReference>
<dbReference type="SMR" id="Q83L76"/>
<dbReference type="STRING" id="198214.SF1415"/>
<dbReference type="PaxDb" id="198214-SF1415"/>
<dbReference type="KEGG" id="sfl:SF1415"/>
<dbReference type="KEGG" id="sfx:S1530"/>
<dbReference type="PATRIC" id="fig|198214.7.peg.1667"/>
<dbReference type="HOGENOM" id="CLU_040940_5_2_6"/>
<dbReference type="Proteomes" id="UP000001006">
    <property type="component" value="Chromosome"/>
</dbReference>
<dbReference type="Proteomes" id="UP000002673">
    <property type="component" value="Chromosome"/>
</dbReference>
<dbReference type="GO" id="GO:0010945">
    <property type="term" value="F:coenzyme A diphosphatase activity"/>
    <property type="evidence" value="ECO:0007669"/>
    <property type="project" value="InterPro"/>
</dbReference>
<dbReference type="GO" id="GO:0000287">
    <property type="term" value="F:magnesium ion binding"/>
    <property type="evidence" value="ECO:0007669"/>
    <property type="project" value="UniProtKB-UniRule"/>
</dbReference>
<dbReference type="GO" id="GO:0030145">
    <property type="term" value="F:manganese ion binding"/>
    <property type="evidence" value="ECO:0007669"/>
    <property type="project" value="UniProtKB-UniRule"/>
</dbReference>
<dbReference type="GO" id="GO:0009132">
    <property type="term" value="P:nucleoside diphosphate metabolic process"/>
    <property type="evidence" value="ECO:0007669"/>
    <property type="project" value="InterPro"/>
</dbReference>
<dbReference type="CDD" id="cd03426">
    <property type="entry name" value="NUDIX_CoAse_Nudt7"/>
    <property type="match status" value="1"/>
</dbReference>
<dbReference type="FunFam" id="3.90.79.10:FF:000013">
    <property type="entry name" value="Uncharacterized Nudix hydrolase NudL"/>
    <property type="match status" value="1"/>
</dbReference>
<dbReference type="Gene3D" id="3.90.79.10">
    <property type="entry name" value="Nucleoside Triphosphate Pyrophosphohydrolase"/>
    <property type="match status" value="1"/>
</dbReference>
<dbReference type="HAMAP" id="MF_01592">
    <property type="entry name" value="Nudix_NudL"/>
    <property type="match status" value="1"/>
</dbReference>
<dbReference type="InterPro" id="IPR045121">
    <property type="entry name" value="CoAse"/>
</dbReference>
<dbReference type="InterPro" id="IPR015797">
    <property type="entry name" value="NUDIX_hydrolase-like_dom_sf"/>
</dbReference>
<dbReference type="InterPro" id="IPR000086">
    <property type="entry name" value="NUDIX_hydrolase_dom"/>
</dbReference>
<dbReference type="InterPro" id="IPR000059">
    <property type="entry name" value="NUDIX_hydrolase_NudL_CS"/>
</dbReference>
<dbReference type="InterPro" id="IPR023735">
    <property type="entry name" value="Nudix_NudL"/>
</dbReference>
<dbReference type="NCBIfam" id="NF007980">
    <property type="entry name" value="PRK10707.1"/>
    <property type="match status" value="1"/>
</dbReference>
<dbReference type="PANTHER" id="PTHR12992:SF11">
    <property type="entry name" value="MITOCHONDRIAL COENZYME A DIPHOSPHATASE NUDT8"/>
    <property type="match status" value="1"/>
</dbReference>
<dbReference type="PANTHER" id="PTHR12992">
    <property type="entry name" value="NUDIX HYDROLASE"/>
    <property type="match status" value="1"/>
</dbReference>
<dbReference type="Pfam" id="PF00293">
    <property type="entry name" value="NUDIX"/>
    <property type="match status" value="1"/>
</dbReference>
<dbReference type="SUPFAM" id="SSF55811">
    <property type="entry name" value="Nudix"/>
    <property type="match status" value="1"/>
</dbReference>
<dbReference type="PROSITE" id="PS51462">
    <property type="entry name" value="NUDIX"/>
    <property type="match status" value="1"/>
</dbReference>
<dbReference type="PROSITE" id="PS01293">
    <property type="entry name" value="NUDIX_COA"/>
    <property type="match status" value="1"/>
</dbReference>
<keyword id="KW-0378">Hydrolase</keyword>
<keyword id="KW-0460">Magnesium</keyword>
<keyword id="KW-0464">Manganese</keyword>
<keyword id="KW-0479">Metal-binding</keyword>
<keyword id="KW-1185">Reference proteome</keyword>
<reference key="1">
    <citation type="journal article" date="2002" name="Nucleic Acids Res.">
        <title>Genome sequence of Shigella flexneri 2a: insights into pathogenicity through comparison with genomes of Escherichia coli K12 and O157.</title>
        <authorList>
            <person name="Jin Q."/>
            <person name="Yuan Z."/>
            <person name="Xu J."/>
            <person name="Wang Y."/>
            <person name="Shen Y."/>
            <person name="Lu W."/>
            <person name="Wang J."/>
            <person name="Liu H."/>
            <person name="Yang J."/>
            <person name="Yang F."/>
            <person name="Zhang X."/>
            <person name="Zhang J."/>
            <person name="Yang G."/>
            <person name="Wu H."/>
            <person name="Qu D."/>
            <person name="Dong J."/>
            <person name="Sun L."/>
            <person name="Xue Y."/>
            <person name="Zhao A."/>
            <person name="Gao Y."/>
            <person name="Zhu J."/>
            <person name="Kan B."/>
            <person name="Ding K."/>
            <person name="Chen S."/>
            <person name="Cheng H."/>
            <person name="Yao Z."/>
            <person name="He B."/>
            <person name="Chen R."/>
            <person name="Ma D."/>
            <person name="Qiang B."/>
            <person name="Wen Y."/>
            <person name="Hou Y."/>
            <person name="Yu J."/>
        </authorList>
    </citation>
    <scope>NUCLEOTIDE SEQUENCE [LARGE SCALE GENOMIC DNA]</scope>
    <source>
        <strain>301 / Serotype 2a</strain>
    </source>
</reference>
<reference key="2">
    <citation type="journal article" date="2003" name="Infect. Immun.">
        <title>Complete genome sequence and comparative genomics of Shigella flexneri serotype 2a strain 2457T.</title>
        <authorList>
            <person name="Wei J."/>
            <person name="Goldberg M.B."/>
            <person name="Burland V."/>
            <person name="Venkatesan M.M."/>
            <person name="Deng W."/>
            <person name="Fournier G."/>
            <person name="Mayhew G.F."/>
            <person name="Plunkett G. III"/>
            <person name="Rose D.J."/>
            <person name="Darling A."/>
            <person name="Mau B."/>
            <person name="Perna N.T."/>
            <person name="Payne S.M."/>
            <person name="Runyen-Janecky L.J."/>
            <person name="Zhou S."/>
            <person name="Schwartz D.C."/>
            <person name="Blattner F.R."/>
        </authorList>
    </citation>
    <scope>NUCLEOTIDE SEQUENCE [LARGE SCALE GENOMIC DNA]</scope>
    <source>
        <strain>ATCC 700930 / 2457T / Serotype 2a</strain>
    </source>
</reference>
<proteinExistence type="inferred from homology"/>
<accession>Q83L76</accession>
<accession>Q7C1R4</accession>
<protein>
    <recommendedName>
        <fullName evidence="1">Uncharacterized Nudix hydrolase NudL</fullName>
        <ecNumber evidence="1">3.6.1.-</ecNumber>
    </recommendedName>
</protein>
<sequence length="192" mass="21433">MEYRSLTLDDFLSRFQLLRPQINREPLNHRQAAVLIPIVRRPQPGLLLTQRSIHLRKHAGQVAFPGGAVDDTDASVIAAALREAEEEVAIPPSAVEVIGVLPPVDSVTGYQVTPVVGIIPPDLPYRASEDEVSAVFEMPLAQALHLGRYHPLDIYRRGDSHRVWLSWYEQYFVWGMTAGIIRELALQIGVTP</sequence>
<feature type="chain" id="PRO_0000315585" description="Uncharacterized Nudix hydrolase NudL">
    <location>
        <begin position="1"/>
        <end position="192"/>
    </location>
</feature>
<feature type="domain" description="Nudix hydrolase" evidence="1">
    <location>
        <begin position="29"/>
        <end position="160"/>
    </location>
</feature>
<feature type="short sequence motif" description="Nudix box">
    <location>
        <begin position="67"/>
        <end position="89"/>
    </location>
</feature>
<feature type="binding site" evidence="1">
    <location>
        <position position="83"/>
    </location>
    <ligand>
        <name>Mg(2+)</name>
        <dbReference type="ChEBI" id="CHEBI:18420"/>
    </ligand>
</feature>
<feature type="binding site" evidence="1">
    <location>
        <position position="87"/>
    </location>
    <ligand>
        <name>Mg(2+)</name>
        <dbReference type="ChEBI" id="CHEBI:18420"/>
    </ligand>
</feature>
<comment type="function">
    <text evidence="1">Probably mediates the hydrolysis of some nucleoside diphosphate derivatives.</text>
</comment>
<comment type="cofactor">
    <cofactor evidence="1">
        <name>Mn(2+)</name>
        <dbReference type="ChEBI" id="CHEBI:29035"/>
    </cofactor>
    <cofactor evidence="1">
        <name>Mg(2+)</name>
        <dbReference type="ChEBI" id="CHEBI:18420"/>
    </cofactor>
</comment>
<comment type="similarity">
    <text evidence="1">Belongs to the Nudix hydrolase family. PCD1 subfamily.</text>
</comment>